<gene>
    <name evidence="1" type="primary">rplV</name>
    <name type="ordered locus">YpsIP31758_3910</name>
</gene>
<dbReference type="EMBL" id="CP000720">
    <property type="protein sequence ID" value="ABS48730.1"/>
    <property type="molecule type" value="Genomic_DNA"/>
</dbReference>
<dbReference type="RefSeq" id="WP_002223844.1">
    <property type="nucleotide sequence ID" value="NC_009708.1"/>
</dbReference>
<dbReference type="SMR" id="A7FNN0"/>
<dbReference type="GeneID" id="98190601"/>
<dbReference type="KEGG" id="ypi:YpsIP31758_3910"/>
<dbReference type="HOGENOM" id="CLU_083987_3_3_6"/>
<dbReference type="Proteomes" id="UP000002412">
    <property type="component" value="Chromosome"/>
</dbReference>
<dbReference type="GO" id="GO:0022625">
    <property type="term" value="C:cytosolic large ribosomal subunit"/>
    <property type="evidence" value="ECO:0007669"/>
    <property type="project" value="TreeGrafter"/>
</dbReference>
<dbReference type="GO" id="GO:0019843">
    <property type="term" value="F:rRNA binding"/>
    <property type="evidence" value="ECO:0007669"/>
    <property type="project" value="UniProtKB-UniRule"/>
</dbReference>
<dbReference type="GO" id="GO:0003735">
    <property type="term" value="F:structural constituent of ribosome"/>
    <property type="evidence" value="ECO:0007669"/>
    <property type="project" value="InterPro"/>
</dbReference>
<dbReference type="GO" id="GO:0006412">
    <property type="term" value="P:translation"/>
    <property type="evidence" value="ECO:0007669"/>
    <property type="project" value="UniProtKB-UniRule"/>
</dbReference>
<dbReference type="CDD" id="cd00336">
    <property type="entry name" value="Ribosomal_L22"/>
    <property type="match status" value="1"/>
</dbReference>
<dbReference type="FunFam" id="3.90.470.10:FF:000001">
    <property type="entry name" value="50S ribosomal protein L22"/>
    <property type="match status" value="1"/>
</dbReference>
<dbReference type="Gene3D" id="3.90.470.10">
    <property type="entry name" value="Ribosomal protein L22/L17"/>
    <property type="match status" value="1"/>
</dbReference>
<dbReference type="HAMAP" id="MF_01331_B">
    <property type="entry name" value="Ribosomal_uL22_B"/>
    <property type="match status" value="1"/>
</dbReference>
<dbReference type="InterPro" id="IPR001063">
    <property type="entry name" value="Ribosomal_uL22"/>
</dbReference>
<dbReference type="InterPro" id="IPR005727">
    <property type="entry name" value="Ribosomal_uL22_bac/chlpt-type"/>
</dbReference>
<dbReference type="InterPro" id="IPR047867">
    <property type="entry name" value="Ribosomal_uL22_bac/org-type"/>
</dbReference>
<dbReference type="InterPro" id="IPR018260">
    <property type="entry name" value="Ribosomal_uL22_CS"/>
</dbReference>
<dbReference type="InterPro" id="IPR036394">
    <property type="entry name" value="Ribosomal_uL22_sf"/>
</dbReference>
<dbReference type="NCBIfam" id="TIGR01044">
    <property type="entry name" value="rplV_bact"/>
    <property type="match status" value="1"/>
</dbReference>
<dbReference type="PANTHER" id="PTHR13501">
    <property type="entry name" value="CHLOROPLAST 50S RIBOSOMAL PROTEIN L22-RELATED"/>
    <property type="match status" value="1"/>
</dbReference>
<dbReference type="PANTHER" id="PTHR13501:SF8">
    <property type="entry name" value="LARGE RIBOSOMAL SUBUNIT PROTEIN UL22M"/>
    <property type="match status" value="1"/>
</dbReference>
<dbReference type="Pfam" id="PF00237">
    <property type="entry name" value="Ribosomal_L22"/>
    <property type="match status" value="1"/>
</dbReference>
<dbReference type="SUPFAM" id="SSF54843">
    <property type="entry name" value="Ribosomal protein L22"/>
    <property type="match status" value="1"/>
</dbReference>
<dbReference type="PROSITE" id="PS00464">
    <property type="entry name" value="RIBOSOMAL_L22"/>
    <property type="match status" value="1"/>
</dbReference>
<name>RL22_YERP3</name>
<evidence type="ECO:0000255" key="1">
    <source>
        <dbReference type="HAMAP-Rule" id="MF_01331"/>
    </source>
</evidence>
<evidence type="ECO:0000305" key="2"/>
<protein>
    <recommendedName>
        <fullName evidence="1">Large ribosomal subunit protein uL22</fullName>
    </recommendedName>
    <alternativeName>
        <fullName evidence="2">50S ribosomal protein L22</fullName>
    </alternativeName>
</protein>
<comment type="function">
    <text evidence="1">This protein binds specifically to 23S rRNA; its binding is stimulated by other ribosomal proteins, e.g. L4, L17, and L20. It is important during the early stages of 50S assembly. It makes multiple contacts with different domains of the 23S rRNA in the assembled 50S subunit and ribosome (By similarity).</text>
</comment>
<comment type="function">
    <text evidence="1">The globular domain of the protein is located near the polypeptide exit tunnel on the outside of the subunit, while an extended beta-hairpin is found that lines the wall of the exit tunnel in the center of the 70S ribosome.</text>
</comment>
<comment type="subunit">
    <text evidence="1">Part of the 50S ribosomal subunit.</text>
</comment>
<comment type="similarity">
    <text evidence="1">Belongs to the universal ribosomal protein uL22 family.</text>
</comment>
<feature type="chain" id="PRO_1000067613" description="Large ribosomal subunit protein uL22">
    <location>
        <begin position="1"/>
        <end position="110"/>
    </location>
</feature>
<keyword id="KW-0687">Ribonucleoprotein</keyword>
<keyword id="KW-0689">Ribosomal protein</keyword>
<keyword id="KW-0694">RNA-binding</keyword>
<keyword id="KW-0699">rRNA-binding</keyword>
<proteinExistence type="inferred from homology"/>
<organism>
    <name type="scientific">Yersinia pseudotuberculosis serotype O:1b (strain IP 31758)</name>
    <dbReference type="NCBI Taxonomy" id="349747"/>
    <lineage>
        <taxon>Bacteria</taxon>
        <taxon>Pseudomonadati</taxon>
        <taxon>Pseudomonadota</taxon>
        <taxon>Gammaproteobacteria</taxon>
        <taxon>Enterobacterales</taxon>
        <taxon>Yersiniaceae</taxon>
        <taxon>Yersinia</taxon>
    </lineage>
</organism>
<sequence>METIAKHRHARSSAQKVRLVADLIRGKKVSQALETLTYTNKKAAGLVKKVLESAIANAEHNDGADIDDLKVTKIFVDEGPSMKRIMPRAKGRADRILKRTSHITVVVSDR</sequence>
<accession>A7FNN0</accession>
<reference key="1">
    <citation type="journal article" date="2007" name="PLoS Genet.">
        <title>The complete genome sequence of Yersinia pseudotuberculosis IP31758, the causative agent of Far East scarlet-like fever.</title>
        <authorList>
            <person name="Eppinger M."/>
            <person name="Rosovitz M.J."/>
            <person name="Fricke W.F."/>
            <person name="Rasko D.A."/>
            <person name="Kokorina G."/>
            <person name="Fayolle C."/>
            <person name="Lindler L.E."/>
            <person name="Carniel E."/>
            <person name="Ravel J."/>
        </authorList>
    </citation>
    <scope>NUCLEOTIDE SEQUENCE [LARGE SCALE GENOMIC DNA]</scope>
    <source>
        <strain>IP 31758</strain>
    </source>
</reference>